<geneLocation type="chloroplast"/>
<reference key="1">
    <citation type="journal article" date="2007" name="Proc. Natl. Acad. Sci. U.S.A.">
        <title>Using plastid genome-scale data to resolve enigmatic relationships among basal angiosperms.</title>
        <authorList>
            <person name="Moore M.J."/>
            <person name="Bell C.D."/>
            <person name="Soltis P.S."/>
            <person name="Soltis D.E."/>
        </authorList>
    </citation>
    <scope>NUCLEOTIDE SEQUENCE [LARGE SCALE GENOMIC DNA]</scope>
</reference>
<name>NDHK_CERDE</name>
<feature type="chain" id="PRO_0000358528" description="NAD(P)H-quinone oxidoreductase subunit K, chloroplastic">
    <location>
        <begin position="1"/>
        <end position="228"/>
    </location>
</feature>
<feature type="binding site" evidence="1">
    <location>
        <position position="43"/>
    </location>
    <ligand>
        <name>[4Fe-4S] cluster</name>
        <dbReference type="ChEBI" id="CHEBI:49883"/>
    </ligand>
</feature>
<feature type="binding site" evidence="1">
    <location>
        <position position="44"/>
    </location>
    <ligand>
        <name>[4Fe-4S] cluster</name>
        <dbReference type="ChEBI" id="CHEBI:49883"/>
    </ligand>
</feature>
<feature type="binding site" evidence="1">
    <location>
        <position position="108"/>
    </location>
    <ligand>
        <name>[4Fe-4S] cluster</name>
        <dbReference type="ChEBI" id="CHEBI:49883"/>
    </ligand>
</feature>
<feature type="binding site" evidence="1">
    <location>
        <position position="139"/>
    </location>
    <ligand>
        <name>[4Fe-4S] cluster</name>
        <dbReference type="ChEBI" id="CHEBI:49883"/>
    </ligand>
</feature>
<keyword id="KW-0004">4Fe-4S</keyword>
<keyword id="KW-0150">Chloroplast</keyword>
<keyword id="KW-0408">Iron</keyword>
<keyword id="KW-0411">Iron-sulfur</keyword>
<keyword id="KW-0472">Membrane</keyword>
<keyword id="KW-0479">Metal-binding</keyword>
<keyword id="KW-0520">NAD</keyword>
<keyword id="KW-0521">NADP</keyword>
<keyword id="KW-0934">Plastid</keyword>
<keyword id="KW-0618">Plastoquinone</keyword>
<keyword id="KW-0874">Quinone</keyword>
<keyword id="KW-0793">Thylakoid</keyword>
<keyword id="KW-1278">Translocase</keyword>
<keyword id="KW-0813">Transport</keyword>
<evidence type="ECO:0000255" key="1">
    <source>
        <dbReference type="HAMAP-Rule" id="MF_01356"/>
    </source>
</evidence>
<evidence type="ECO:0000305" key="2"/>
<dbReference type="EC" id="7.1.1.-" evidence="1"/>
<dbReference type="EMBL" id="EF614270">
    <property type="protein sequence ID" value="ABQ81454.1"/>
    <property type="status" value="ALT_INIT"/>
    <property type="molecule type" value="Genomic_DNA"/>
</dbReference>
<dbReference type="RefSeq" id="YP_001542451.1">
    <property type="nucleotide sequence ID" value="NC_009962.1"/>
</dbReference>
<dbReference type="SMR" id="A8SEA7"/>
<dbReference type="GeneID" id="5729382"/>
<dbReference type="GO" id="GO:0009535">
    <property type="term" value="C:chloroplast thylakoid membrane"/>
    <property type="evidence" value="ECO:0007669"/>
    <property type="project" value="UniProtKB-SubCell"/>
</dbReference>
<dbReference type="GO" id="GO:0045271">
    <property type="term" value="C:respiratory chain complex I"/>
    <property type="evidence" value="ECO:0007669"/>
    <property type="project" value="TreeGrafter"/>
</dbReference>
<dbReference type="GO" id="GO:0051539">
    <property type="term" value="F:4 iron, 4 sulfur cluster binding"/>
    <property type="evidence" value="ECO:0007669"/>
    <property type="project" value="UniProtKB-KW"/>
</dbReference>
<dbReference type="GO" id="GO:0005506">
    <property type="term" value="F:iron ion binding"/>
    <property type="evidence" value="ECO:0007669"/>
    <property type="project" value="UniProtKB-UniRule"/>
</dbReference>
<dbReference type="GO" id="GO:0008137">
    <property type="term" value="F:NADH dehydrogenase (ubiquinone) activity"/>
    <property type="evidence" value="ECO:0007669"/>
    <property type="project" value="InterPro"/>
</dbReference>
<dbReference type="GO" id="GO:0048038">
    <property type="term" value="F:quinone binding"/>
    <property type="evidence" value="ECO:0007669"/>
    <property type="project" value="UniProtKB-KW"/>
</dbReference>
<dbReference type="GO" id="GO:0009060">
    <property type="term" value="P:aerobic respiration"/>
    <property type="evidence" value="ECO:0007669"/>
    <property type="project" value="TreeGrafter"/>
</dbReference>
<dbReference type="GO" id="GO:0015990">
    <property type="term" value="P:electron transport coupled proton transport"/>
    <property type="evidence" value="ECO:0007669"/>
    <property type="project" value="TreeGrafter"/>
</dbReference>
<dbReference type="GO" id="GO:0019684">
    <property type="term" value="P:photosynthesis, light reaction"/>
    <property type="evidence" value="ECO:0007669"/>
    <property type="project" value="UniProtKB-UniRule"/>
</dbReference>
<dbReference type="FunFam" id="3.40.50.12280:FF:000003">
    <property type="entry name" value="NAD(P)H-quinone oxidoreductase subunit K, chloroplastic"/>
    <property type="match status" value="1"/>
</dbReference>
<dbReference type="Gene3D" id="3.40.50.12280">
    <property type="match status" value="1"/>
</dbReference>
<dbReference type="HAMAP" id="MF_01356">
    <property type="entry name" value="NDH1_NuoB"/>
    <property type="match status" value="1"/>
</dbReference>
<dbReference type="InterPro" id="IPR006137">
    <property type="entry name" value="NADH_UbQ_OxRdtase-like_20kDa"/>
</dbReference>
<dbReference type="InterPro" id="IPR006138">
    <property type="entry name" value="NADH_UQ_OxRdtase_20Kd_su"/>
</dbReference>
<dbReference type="NCBIfam" id="TIGR01957">
    <property type="entry name" value="nuoB_fam"/>
    <property type="match status" value="1"/>
</dbReference>
<dbReference type="NCBIfam" id="NF005012">
    <property type="entry name" value="PRK06411.1"/>
    <property type="match status" value="1"/>
</dbReference>
<dbReference type="PANTHER" id="PTHR11995">
    <property type="entry name" value="NADH DEHYDROGENASE"/>
    <property type="match status" value="1"/>
</dbReference>
<dbReference type="PANTHER" id="PTHR11995:SF14">
    <property type="entry name" value="NADH DEHYDROGENASE [UBIQUINONE] IRON-SULFUR PROTEIN 7, MITOCHONDRIAL"/>
    <property type="match status" value="1"/>
</dbReference>
<dbReference type="Pfam" id="PF01058">
    <property type="entry name" value="Oxidored_q6"/>
    <property type="match status" value="1"/>
</dbReference>
<dbReference type="SUPFAM" id="SSF56770">
    <property type="entry name" value="HydA/Nqo6-like"/>
    <property type="match status" value="1"/>
</dbReference>
<dbReference type="PROSITE" id="PS01150">
    <property type="entry name" value="COMPLEX1_20K"/>
    <property type="match status" value="1"/>
</dbReference>
<organism>
    <name type="scientific">Ceratophyllum demersum</name>
    <name type="common">Rigid hornwort</name>
    <name type="synonym">Coontail</name>
    <dbReference type="NCBI Taxonomy" id="4428"/>
    <lineage>
        <taxon>Eukaryota</taxon>
        <taxon>Viridiplantae</taxon>
        <taxon>Streptophyta</taxon>
        <taxon>Embryophyta</taxon>
        <taxon>Tracheophyta</taxon>
        <taxon>Spermatophyta</taxon>
        <taxon>Magnoliopsida</taxon>
        <taxon>Ceratophyllales</taxon>
        <taxon>Ceratophyllaceae</taxon>
        <taxon>Ceratophyllum</taxon>
    </lineage>
</organism>
<protein>
    <recommendedName>
        <fullName evidence="1">NAD(P)H-quinone oxidoreductase subunit K, chloroplastic</fullName>
        <ecNumber evidence="1">7.1.1.-</ecNumber>
    </recommendedName>
    <alternativeName>
        <fullName evidence="1">NAD(P)H dehydrogenase subunit K</fullName>
    </alternativeName>
    <alternativeName>
        <fullName evidence="1">NADH-plastoquinone oxidoreductase subunit K</fullName>
    </alternativeName>
</protein>
<accession>A8SEA7</accession>
<gene>
    <name evidence="1" type="primary">ndhK</name>
</gene>
<proteinExistence type="inferred from homology"/>
<comment type="function">
    <text evidence="1">NDH shuttles electrons from NAD(P)H:plastoquinone, via FMN and iron-sulfur (Fe-S) centers, to quinones in the photosynthetic chain and possibly in a chloroplast respiratory chain. The immediate electron acceptor for the enzyme in this species is believed to be plastoquinone. Couples the redox reaction to proton translocation, and thus conserves the redox energy in a proton gradient.</text>
</comment>
<comment type="catalytic activity">
    <reaction evidence="1">
        <text>a plastoquinone + NADH + (n+1) H(+)(in) = a plastoquinol + NAD(+) + n H(+)(out)</text>
        <dbReference type="Rhea" id="RHEA:42608"/>
        <dbReference type="Rhea" id="RHEA-COMP:9561"/>
        <dbReference type="Rhea" id="RHEA-COMP:9562"/>
        <dbReference type="ChEBI" id="CHEBI:15378"/>
        <dbReference type="ChEBI" id="CHEBI:17757"/>
        <dbReference type="ChEBI" id="CHEBI:57540"/>
        <dbReference type="ChEBI" id="CHEBI:57945"/>
        <dbReference type="ChEBI" id="CHEBI:62192"/>
    </reaction>
</comment>
<comment type="catalytic activity">
    <reaction evidence="1">
        <text>a plastoquinone + NADPH + (n+1) H(+)(in) = a plastoquinol + NADP(+) + n H(+)(out)</text>
        <dbReference type="Rhea" id="RHEA:42612"/>
        <dbReference type="Rhea" id="RHEA-COMP:9561"/>
        <dbReference type="Rhea" id="RHEA-COMP:9562"/>
        <dbReference type="ChEBI" id="CHEBI:15378"/>
        <dbReference type="ChEBI" id="CHEBI:17757"/>
        <dbReference type="ChEBI" id="CHEBI:57783"/>
        <dbReference type="ChEBI" id="CHEBI:58349"/>
        <dbReference type="ChEBI" id="CHEBI:62192"/>
    </reaction>
</comment>
<comment type="cofactor">
    <cofactor evidence="1">
        <name>[4Fe-4S] cluster</name>
        <dbReference type="ChEBI" id="CHEBI:49883"/>
    </cofactor>
    <text evidence="1">Binds 1 [4Fe-4S] cluster.</text>
</comment>
<comment type="subunit">
    <text evidence="1">NDH is composed of at least 16 different subunits, 5 of which are encoded in the nucleus.</text>
</comment>
<comment type="subcellular location">
    <subcellularLocation>
        <location evidence="1">Plastid</location>
        <location evidence="1">Chloroplast thylakoid membrane</location>
        <topology evidence="1">Peripheral membrane protein</topology>
        <orientation evidence="1">Stromal side</orientation>
    </subcellularLocation>
</comment>
<comment type="similarity">
    <text evidence="1">Belongs to the complex I 20 kDa subunit family.</text>
</comment>
<comment type="sequence caution" evidence="2">
    <conflict type="erroneous initiation">
        <sequence resource="EMBL-CDS" id="ABQ81454"/>
    </conflict>
</comment>
<sequence length="228" mass="25824">MNSIEFPLFDRTTKNSVISTTSNDLSNWSRLSSLWPLLYGTSCCFIEFASLIGSRFDFDRYGLVPRSSPRQADLILTAGTITMKMAPSLVRLYEQMPKPKYVIAMGACTITGGMFSTDSYSTVRGVDKLIPVDVYLPGCPPKPEAVIDAITKLRKKVSREIYEDRISSQQENRCFTINHKFRIRRSTHTGNYDQGLLDQSPSTSTSRIRPSENFFKYKSTVFSHELVN</sequence>